<comment type="function">
    <text evidence="1">Catalyzes the GTP-dependent ribosomal translocation step during translation elongation. During this step, the ribosome changes from the pre-translocational (PRE) to the post-translocational (POST) state as the newly formed A-site-bound peptidyl-tRNA and P-site-bound deacylated tRNA move to the P and E sites, respectively. Catalyzes the coordinated movement of the two tRNA molecules, the mRNA and conformational changes in the ribosome (By similarity).</text>
</comment>
<comment type="subcellular location">
    <subcellularLocation>
        <location evidence="1">Cytoplasm</location>
    </subcellularLocation>
</comment>
<comment type="similarity">
    <text evidence="3">Belongs to the TRAFAC class translation factor GTPase superfamily. Classic translation factor GTPase family. EF-G/EF-2 subfamily.</text>
</comment>
<proteinExistence type="evidence at protein level"/>
<name>EFG_MYCTU</name>
<protein>
    <recommendedName>
        <fullName>Elongation factor G</fullName>
        <shortName>EF-G</shortName>
    </recommendedName>
</protein>
<gene>
    <name type="primary">fusA</name>
    <name type="ordered locus">Rv0684</name>
    <name type="ORF">MTCY210.01</name>
    <name type="ORF">MTV040.12</name>
</gene>
<reference key="1">
    <citation type="journal article" date="1998" name="Nature">
        <title>Deciphering the biology of Mycobacterium tuberculosis from the complete genome sequence.</title>
        <authorList>
            <person name="Cole S.T."/>
            <person name="Brosch R."/>
            <person name="Parkhill J."/>
            <person name="Garnier T."/>
            <person name="Churcher C.M."/>
            <person name="Harris D.E."/>
            <person name="Gordon S.V."/>
            <person name="Eiglmeier K."/>
            <person name="Gas S."/>
            <person name="Barry C.E. III"/>
            <person name="Tekaia F."/>
            <person name="Badcock K."/>
            <person name="Basham D."/>
            <person name="Brown D."/>
            <person name="Chillingworth T."/>
            <person name="Connor R."/>
            <person name="Davies R.M."/>
            <person name="Devlin K."/>
            <person name="Feltwell T."/>
            <person name="Gentles S."/>
            <person name="Hamlin N."/>
            <person name="Holroyd S."/>
            <person name="Hornsby T."/>
            <person name="Jagels K."/>
            <person name="Krogh A."/>
            <person name="McLean J."/>
            <person name="Moule S."/>
            <person name="Murphy L.D."/>
            <person name="Oliver S."/>
            <person name="Osborne J."/>
            <person name="Quail M.A."/>
            <person name="Rajandream M.A."/>
            <person name="Rogers J."/>
            <person name="Rutter S."/>
            <person name="Seeger K."/>
            <person name="Skelton S."/>
            <person name="Squares S."/>
            <person name="Squares R."/>
            <person name="Sulston J.E."/>
            <person name="Taylor K."/>
            <person name="Whitehead S."/>
            <person name="Barrell B.G."/>
        </authorList>
    </citation>
    <scope>NUCLEOTIDE SEQUENCE [LARGE SCALE GENOMIC DNA]</scope>
    <source>
        <strain>ATCC 25618 / H37Rv</strain>
    </source>
</reference>
<reference key="2">
    <citation type="journal article" date="2010" name="PLoS ONE">
        <title>Prokaryotic ubiquitin-like protein (Pup) proteome of Mycobacterium tuberculosis.</title>
        <authorList>
            <person name="Festa R.A."/>
            <person name="McAllister F."/>
            <person name="Pearce M.J."/>
            <person name="Mintseris J."/>
            <person name="Burns K.E."/>
            <person name="Gygi S.P."/>
            <person name="Darwin K.H."/>
        </authorList>
    </citation>
    <scope>PUPYLATION AT LYS-307</scope>
    <scope>IDENTIFICATION BY MASS SPECTROMETRY</scope>
    <source>
        <strain>ATCC 25618 / H37Rv</strain>
    </source>
</reference>
<reference key="3">
    <citation type="journal article" date="2011" name="Mol. Cell. Proteomics">
        <title>Proteogenomic analysis of Mycobacterium tuberculosis by high resolution mass spectrometry.</title>
        <authorList>
            <person name="Kelkar D.S."/>
            <person name="Kumar D."/>
            <person name="Kumar P."/>
            <person name="Balakrishnan L."/>
            <person name="Muthusamy B."/>
            <person name="Yadav A.K."/>
            <person name="Shrivastava P."/>
            <person name="Marimuthu A."/>
            <person name="Anand S."/>
            <person name="Sundaram H."/>
            <person name="Kingsbury R."/>
            <person name="Harsha H.C."/>
            <person name="Nair B."/>
            <person name="Prasad T.S."/>
            <person name="Chauhan D.S."/>
            <person name="Katoch K."/>
            <person name="Katoch V.M."/>
            <person name="Kumar P."/>
            <person name="Chaerkady R."/>
            <person name="Ramachandran S."/>
            <person name="Dash D."/>
            <person name="Pandey A."/>
        </authorList>
    </citation>
    <scope>IDENTIFICATION BY MASS SPECTROMETRY [LARGE SCALE ANALYSIS]</scope>
    <source>
        <strain>ATCC 25618 / H37Rv</strain>
    </source>
</reference>
<keyword id="KW-0002">3D-structure</keyword>
<keyword id="KW-0963">Cytoplasm</keyword>
<keyword id="KW-0251">Elongation factor</keyword>
<keyword id="KW-0342">GTP-binding</keyword>
<keyword id="KW-1017">Isopeptide bond</keyword>
<keyword id="KW-0547">Nucleotide-binding</keyword>
<keyword id="KW-0648">Protein biosynthesis</keyword>
<keyword id="KW-1185">Reference proteome</keyword>
<keyword id="KW-0832">Ubl conjugation</keyword>
<feature type="chain" id="PRO_0000091165" description="Elongation factor G">
    <location>
        <begin position="1"/>
        <end position="701"/>
    </location>
</feature>
<feature type="domain" description="tr-type G">
    <location>
        <begin position="11"/>
        <end position="287"/>
    </location>
</feature>
<feature type="binding site" evidence="1">
    <location>
        <begin position="20"/>
        <end position="27"/>
    </location>
    <ligand>
        <name>GTP</name>
        <dbReference type="ChEBI" id="CHEBI:37565"/>
    </ligand>
</feature>
<feature type="binding site" evidence="1">
    <location>
        <begin position="84"/>
        <end position="88"/>
    </location>
    <ligand>
        <name>GTP</name>
        <dbReference type="ChEBI" id="CHEBI:37565"/>
    </ligand>
</feature>
<feature type="binding site" evidence="1">
    <location>
        <begin position="138"/>
        <end position="141"/>
    </location>
    <ligand>
        <name>GTP</name>
        <dbReference type="ChEBI" id="CHEBI:37565"/>
    </ligand>
</feature>
<feature type="cross-link" description="Isoglutamyl lysine isopeptide (Lys-Gln) (interchain with Q-Cter in protein Pup)" evidence="2">
    <location>
        <position position="307"/>
    </location>
</feature>
<feature type="helix" evidence="4">
    <location>
        <begin position="10"/>
        <end position="12"/>
    </location>
</feature>
<feature type="strand" evidence="4">
    <location>
        <begin position="13"/>
        <end position="20"/>
    </location>
</feature>
<feature type="helix" evidence="4">
    <location>
        <begin position="26"/>
        <end position="39"/>
    </location>
</feature>
<feature type="turn" evidence="4">
    <location>
        <begin position="43"/>
        <end position="45"/>
    </location>
</feature>
<feature type="strand" evidence="4">
    <location>
        <begin position="68"/>
        <end position="75"/>
    </location>
</feature>
<feature type="strand" evidence="4">
    <location>
        <begin position="78"/>
        <end position="83"/>
    </location>
</feature>
<feature type="helix" evidence="4">
    <location>
        <begin position="93"/>
        <end position="101"/>
    </location>
</feature>
<feature type="strand" evidence="4">
    <location>
        <begin position="103"/>
        <end position="110"/>
    </location>
</feature>
<feature type="turn" evidence="4">
    <location>
        <begin position="111"/>
        <end position="113"/>
    </location>
</feature>
<feature type="helix" evidence="4">
    <location>
        <begin position="117"/>
        <end position="128"/>
    </location>
</feature>
<feature type="strand" evidence="4">
    <location>
        <begin position="133"/>
        <end position="138"/>
    </location>
</feature>
<feature type="helix" evidence="4">
    <location>
        <begin position="147"/>
        <end position="158"/>
    </location>
</feature>
<feature type="strand" evidence="4">
    <location>
        <begin position="162"/>
        <end position="171"/>
    </location>
</feature>
<feature type="helix" evidence="4">
    <location>
        <begin position="172"/>
        <end position="174"/>
    </location>
</feature>
<feature type="strand" evidence="4">
    <location>
        <begin position="177"/>
        <end position="180"/>
    </location>
</feature>
<feature type="turn" evidence="4">
    <location>
        <begin position="181"/>
        <end position="184"/>
    </location>
</feature>
<feature type="strand" evidence="4">
    <location>
        <begin position="185"/>
        <end position="188"/>
    </location>
</feature>
<feature type="strand" evidence="4">
    <location>
        <begin position="200"/>
        <end position="202"/>
    </location>
</feature>
<feature type="helix" evidence="4">
    <location>
        <begin position="206"/>
        <end position="208"/>
    </location>
</feature>
<feature type="helix" evidence="4">
    <location>
        <begin position="209"/>
        <end position="226"/>
    </location>
</feature>
<feature type="helix" evidence="4">
    <location>
        <begin position="228"/>
        <end position="235"/>
    </location>
</feature>
<feature type="helix" evidence="4">
    <location>
        <begin position="242"/>
        <end position="254"/>
    </location>
</feature>
<feature type="strand" evidence="4">
    <location>
        <begin position="259"/>
        <end position="263"/>
    </location>
</feature>
<feature type="turn" evidence="4">
    <location>
        <begin position="266"/>
        <end position="269"/>
    </location>
</feature>
<feature type="helix" evidence="4">
    <location>
        <begin position="272"/>
        <end position="282"/>
    </location>
</feature>
<feature type="turn" evidence="4">
    <location>
        <begin position="286"/>
        <end position="288"/>
    </location>
</feature>
<feature type="strand" evidence="4">
    <location>
        <begin position="292"/>
        <end position="295"/>
    </location>
</feature>
<feature type="strand" evidence="4">
    <location>
        <begin position="302"/>
        <end position="306"/>
    </location>
</feature>
<feature type="strand" evidence="4">
    <location>
        <begin position="315"/>
        <end position="324"/>
    </location>
</feature>
<feature type="turn" evidence="4">
    <location>
        <begin position="325"/>
        <end position="327"/>
    </location>
</feature>
<feature type="strand" evidence="4">
    <location>
        <begin position="328"/>
        <end position="341"/>
    </location>
</feature>
<feature type="strand" evidence="4">
    <location>
        <begin position="345"/>
        <end position="348"/>
    </location>
</feature>
<feature type="turn" evidence="4">
    <location>
        <begin position="349"/>
        <end position="351"/>
    </location>
</feature>
<feature type="strand" evidence="4">
    <location>
        <begin position="354"/>
        <end position="356"/>
    </location>
</feature>
<feature type="strand" evidence="4">
    <location>
        <begin position="360"/>
        <end position="375"/>
    </location>
</feature>
<feature type="strand" evidence="4">
    <location>
        <begin position="379"/>
        <end position="382"/>
    </location>
</feature>
<feature type="strand" evidence="4">
    <location>
        <begin position="393"/>
        <end position="395"/>
    </location>
</feature>
<feature type="strand" evidence="4">
    <location>
        <begin position="397"/>
        <end position="399"/>
    </location>
</feature>
<feature type="strand" evidence="4">
    <location>
        <begin position="402"/>
        <end position="404"/>
    </location>
</feature>
<feature type="strand" evidence="4">
    <location>
        <begin position="412"/>
        <end position="421"/>
    </location>
</feature>
<feature type="helix" evidence="4">
    <location>
        <begin position="422"/>
        <end position="438"/>
    </location>
</feature>
<feature type="strand" evidence="4">
    <location>
        <begin position="443"/>
        <end position="447"/>
    </location>
</feature>
<feature type="turn" evidence="4">
    <location>
        <begin position="448"/>
        <end position="451"/>
    </location>
</feature>
<feature type="strand" evidence="4">
    <location>
        <begin position="452"/>
        <end position="459"/>
    </location>
</feature>
<feature type="helix" evidence="4">
    <location>
        <begin position="460"/>
        <end position="472"/>
    </location>
</feature>
<feature type="strand" evidence="4">
    <location>
        <begin position="478"/>
        <end position="480"/>
    </location>
</feature>
<feature type="strand" evidence="4">
    <location>
        <begin position="488"/>
        <end position="491"/>
    </location>
</feature>
<feature type="strand" evidence="4">
    <location>
        <begin position="495"/>
        <end position="504"/>
    </location>
</feature>
<feature type="strand" evidence="4">
    <location>
        <begin position="507"/>
        <end position="509"/>
    </location>
</feature>
<feature type="strand" evidence="4">
    <location>
        <begin position="511"/>
        <end position="521"/>
    </location>
</feature>
<feature type="strand" evidence="4">
    <location>
        <begin position="530"/>
        <end position="534"/>
    </location>
</feature>
<feature type="helix" evidence="4">
    <location>
        <begin position="543"/>
        <end position="545"/>
    </location>
</feature>
<feature type="helix" evidence="4">
    <location>
        <begin position="546"/>
        <end position="557"/>
    </location>
</feature>
<feature type="strand" evidence="4">
    <location>
        <begin position="561"/>
        <end position="564"/>
    </location>
</feature>
<feature type="strand" evidence="4">
    <location>
        <begin position="569"/>
        <end position="578"/>
    </location>
</feature>
<feature type="turn" evidence="4">
    <location>
        <begin position="581"/>
        <end position="583"/>
    </location>
</feature>
<feature type="helix" evidence="4">
    <location>
        <begin position="586"/>
        <end position="602"/>
    </location>
</feature>
<feature type="strand" evidence="4">
    <location>
        <begin position="606"/>
        <end position="619"/>
    </location>
</feature>
<feature type="helix" evidence="4">
    <location>
        <begin position="621"/>
        <end position="633"/>
    </location>
</feature>
<feature type="strand" evidence="4">
    <location>
        <begin position="637"/>
        <end position="644"/>
    </location>
</feature>
<feature type="strand" evidence="4">
    <location>
        <begin position="647"/>
        <end position="655"/>
    </location>
</feature>
<feature type="helix" evidence="4">
    <location>
        <begin position="656"/>
        <end position="658"/>
    </location>
</feature>
<feature type="helix" evidence="4">
    <location>
        <begin position="662"/>
        <end position="669"/>
    </location>
</feature>
<feature type="turn" evidence="4">
    <location>
        <begin position="670"/>
        <end position="672"/>
    </location>
</feature>
<feature type="strand" evidence="4">
    <location>
        <begin position="675"/>
        <end position="685"/>
    </location>
</feature>
<feature type="helix" evidence="4">
    <location>
        <begin position="688"/>
        <end position="700"/>
    </location>
</feature>
<evidence type="ECO:0000250" key="1"/>
<evidence type="ECO:0000269" key="2">
    <source>
    </source>
</evidence>
<evidence type="ECO:0000305" key="3"/>
<evidence type="ECO:0007829" key="4">
    <source>
        <dbReference type="PDB" id="7CDW"/>
    </source>
</evidence>
<accession>P9WNM7</accession>
<accession>L0T7E8</accession>
<accession>O53790</accession>
<accession>P0A556</accession>
<organism>
    <name type="scientific">Mycobacterium tuberculosis (strain ATCC 25618 / H37Rv)</name>
    <dbReference type="NCBI Taxonomy" id="83332"/>
    <lineage>
        <taxon>Bacteria</taxon>
        <taxon>Bacillati</taxon>
        <taxon>Actinomycetota</taxon>
        <taxon>Actinomycetes</taxon>
        <taxon>Mycobacteriales</taxon>
        <taxon>Mycobacteriaceae</taxon>
        <taxon>Mycobacterium</taxon>
        <taxon>Mycobacterium tuberculosis complex</taxon>
    </lineage>
</organism>
<dbReference type="EMBL" id="AL123456">
    <property type="protein sequence ID" value="CCP43427.1"/>
    <property type="molecule type" value="Genomic_DNA"/>
</dbReference>
<dbReference type="PIR" id="E70827">
    <property type="entry name" value="E70827"/>
</dbReference>
<dbReference type="RefSeq" id="WP_003898554.1">
    <property type="nucleotide sequence ID" value="NZ_NVQJ01000007.1"/>
</dbReference>
<dbReference type="RefSeq" id="YP_177746.1">
    <property type="nucleotide sequence ID" value="NC_000962.3"/>
</dbReference>
<dbReference type="PDB" id="7CDW">
    <property type="method" value="X-ray"/>
    <property type="resolution" value="3.00 A"/>
    <property type="chains" value="A/B=1-701"/>
</dbReference>
<dbReference type="PDBsum" id="7CDW"/>
<dbReference type="SMR" id="P9WNM7"/>
<dbReference type="FunCoup" id="P9WNM7">
    <property type="interactions" value="479"/>
</dbReference>
<dbReference type="STRING" id="83332.Rv0684"/>
<dbReference type="PaxDb" id="83332-Rv0684"/>
<dbReference type="GeneID" id="45424646"/>
<dbReference type="GeneID" id="888240"/>
<dbReference type="KEGG" id="mtu:Rv0684"/>
<dbReference type="KEGG" id="mtv:RVBD_0684"/>
<dbReference type="TubercuList" id="Rv0684"/>
<dbReference type="eggNOG" id="COG0480">
    <property type="taxonomic scope" value="Bacteria"/>
</dbReference>
<dbReference type="InParanoid" id="P9WNM7"/>
<dbReference type="OrthoDB" id="9801472at2"/>
<dbReference type="PhylomeDB" id="P9WNM7"/>
<dbReference type="Proteomes" id="UP000001584">
    <property type="component" value="Chromosome"/>
</dbReference>
<dbReference type="GO" id="GO:0005737">
    <property type="term" value="C:cytoplasm"/>
    <property type="evidence" value="ECO:0007669"/>
    <property type="project" value="UniProtKB-SubCell"/>
</dbReference>
<dbReference type="GO" id="GO:0009274">
    <property type="term" value="C:peptidoglycan-based cell wall"/>
    <property type="evidence" value="ECO:0007005"/>
    <property type="project" value="MTBBASE"/>
</dbReference>
<dbReference type="GO" id="GO:0005886">
    <property type="term" value="C:plasma membrane"/>
    <property type="evidence" value="ECO:0007005"/>
    <property type="project" value="MTBBASE"/>
</dbReference>
<dbReference type="GO" id="GO:0005525">
    <property type="term" value="F:GTP binding"/>
    <property type="evidence" value="ECO:0007669"/>
    <property type="project" value="UniProtKB-UniRule"/>
</dbReference>
<dbReference type="GO" id="GO:0003924">
    <property type="term" value="F:GTPase activity"/>
    <property type="evidence" value="ECO:0007669"/>
    <property type="project" value="InterPro"/>
</dbReference>
<dbReference type="GO" id="GO:0003746">
    <property type="term" value="F:translation elongation factor activity"/>
    <property type="evidence" value="ECO:0007669"/>
    <property type="project" value="UniProtKB-UniRule"/>
</dbReference>
<dbReference type="GO" id="GO:0032790">
    <property type="term" value="P:ribosome disassembly"/>
    <property type="evidence" value="ECO:0000318"/>
    <property type="project" value="GO_Central"/>
</dbReference>
<dbReference type="CDD" id="cd01886">
    <property type="entry name" value="EF-G"/>
    <property type="match status" value="1"/>
</dbReference>
<dbReference type="CDD" id="cd16262">
    <property type="entry name" value="EFG_III"/>
    <property type="match status" value="1"/>
</dbReference>
<dbReference type="CDD" id="cd01434">
    <property type="entry name" value="EFG_mtEFG1_IV"/>
    <property type="match status" value="1"/>
</dbReference>
<dbReference type="CDD" id="cd03713">
    <property type="entry name" value="EFG_mtEFG_C"/>
    <property type="match status" value="1"/>
</dbReference>
<dbReference type="CDD" id="cd04088">
    <property type="entry name" value="EFG_mtEFG_II"/>
    <property type="match status" value="1"/>
</dbReference>
<dbReference type="FunFam" id="2.40.30.10:FF:000006">
    <property type="entry name" value="Elongation factor G"/>
    <property type="match status" value="1"/>
</dbReference>
<dbReference type="FunFam" id="3.30.230.10:FF:000003">
    <property type="entry name" value="Elongation factor G"/>
    <property type="match status" value="1"/>
</dbReference>
<dbReference type="FunFam" id="3.30.70.240:FF:000001">
    <property type="entry name" value="Elongation factor G"/>
    <property type="match status" value="1"/>
</dbReference>
<dbReference type="FunFam" id="3.30.70.870:FF:000001">
    <property type="entry name" value="Elongation factor G"/>
    <property type="match status" value="1"/>
</dbReference>
<dbReference type="FunFam" id="3.40.50.300:FF:000029">
    <property type="entry name" value="Elongation factor G"/>
    <property type="match status" value="1"/>
</dbReference>
<dbReference type="Gene3D" id="3.30.230.10">
    <property type="match status" value="1"/>
</dbReference>
<dbReference type="Gene3D" id="3.30.70.240">
    <property type="match status" value="1"/>
</dbReference>
<dbReference type="Gene3D" id="3.30.70.870">
    <property type="entry name" value="Elongation Factor G (Translational Gtpase), domain 3"/>
    <property type="match status" value="1"/>
</dbReference>
<dbReference type="Gene3D" id="3.40.50.300">
    <property type="entry name" value="P-loop containing nucleotide triphosphate hydrolases"/>
    <property type="match status" value="1"/>
</dbReference>
<dbReference type="Gene3D" id="2.40.30.10">
    <property type="entry name" value="Translation factors"/>
    <property type="match status" value="1"/>
</dbReference>
<dbReference type="HAMAP" id="MF_00054_B">
    <property type="entry name" value="EF_G_EF_2_B"/>
    <property type="match status" value="1"/>
</dbReference>
<dbReference type="InterPro" id="IPR041095">
    <property type="entry name" value="EFG_II"/>
</dbReference>
<dbReference type="InterPro" id="IPR009022">
    <property type="entry name" value="EFG_III"/>
</dbReference>
<dbReference type="InterPro" id="IPR035647">
    <property type="entry name" value="EFG_III/V"/>
</dbReference>
<dbReference type="InterPro" id="IPR047872">
    <property type="entry name" value="EFG_IV"/>
</dbReference>
<dbReference type="InterPro" id="IPR035649">
    <property type="entry name" value="EFG_V"/>
</dbReference>
<dbReference type="InterPro" id="IPR000640">
    <property type="entry name" value="EFG_V-like"/>
</dbReference>
<dbReference type="InterPro" id="IPR004161">
    <property type="entry name" value="EFTu-like_2"/>
</dbReference>
<dbReference type="InterPro" id="IPR031157">
    <property type="entry name" value="G_TR_CS"/>
</dbReference>
<dbReference type="InterPro" id="IPR027417">
    <property type="entry name" value="P-loop_NTPase"/>
</dbReference>
<dbReference type="InterPro" id="IPR020568">
    <property type="entry name" value="Ribosomal_Su5_D2-typ_SF"/>
</dbReference>
<dbReference type="InterPro" id="IPR014721">
    <property type="entry name" value="Ribsml_uS5_D2-typ_fold_subgr"/>
</dbReference>
<dbReference type="InterPro" id="IPR005225">
    <property type="entry name" value="Small_GTP-bd"/>
</dbReference>
<dbReference type="InterPro" id="IPR000795">
    <property type="entry name" value="T_Tr_GTP-bd_dom"/>
</dbReference>
<dbReference type="InterPro" id="IPR009000">
    <property type="entry name" value="Transl_B-barrel_sf"/>
</dbReference>
<dbReference type="InterPro" id="IPR004540">
    <property type="entry name" value="Transl_elong_EFG/EF2"/>
</dbReference>
<dbReference type="InterPro" id="IPR005517">
    <property type="entry name" value="Transl_elong_EFG/EF2_IV"/>
</dbReference>
<dbReference type="NCBIfam" id="TIGR00484">
    <property type="entry name" value="EF-G"/>
    <property type="match status" value="1"/>
</dbReference>
<dbReference type="NCBIfam" id="NF009381">
    <property type="entry name" value="PRK12740.1-5"/>
    <property type="match status" value="1"/>
</dbReference>
<dbReference type="NCBIfam" id="TIGR00231">
    <property type="entry name" value="small_GTP"/>
    <property type="match status" value="1"/>
</dbReference>
<dbReference type="PANTHER" id="PTHR43261:SF1">
    <property type="entry name" value="RIBOSOME-RELEASING FACTOR 2, MITOCHONDRIAL"/>
    <property type="match status" value="1"/>
</dbReference>
<dbReference type="PANTHER" id="PTHR43261">
    <property type="entry name" value="TRANSLATION ELONGATION FACTOR G-RELATED"/>
    <property type="match status" value="1"/>
</dbReference>
<dbReference type="Pfam" id="PF00679">
    <property type="entry name" value="EFG_C"/>
    <property type="match status" value="1"/>
</dbReference>
<dbReference type="Pfam" id="PF14492">
    <property type="entry name" value="EFG_III"/>
    <property type="match status" value="1"/>
</dbReference>
<dbReference type="Pfam" id="PF03764">
    <property type="entry name" value="EFG_IV"/>
    <property type="match status" value="1"/>
</dbReference>
<dbReference type="Pfam" id="PF00009">
    <property type="entry name" value="GTP_EFTU"/>
    <property type="match status" value="1"/>
</dbReference>
<dbReference type="Pfam" id="PF03144">
    <property type="entry name" value="GTP_EFTU_D2"/>
    <property type="match status" value="1"/>
</dbReference>
<dbReference type="PRINTS" id="PR00315">
    <property type="entry name" value="ELONGATNFCT"/>
</dbReference>
<dbReference type="SMART" id="SM00838">
    <property type="entry name" value="EFG_C"/>
    <property type="match status" value="1"/>
</dbReference>
<dbReference type="SMART" id="SM00889">
    <property type="entry name" value="EFG_IV"/>
    <property type="match status" value="1"/>
</dbReference>
<dbReference type="SUPFAM" id="SSF54980">
    <property type="entry name" value="EF-G C-terminal domain-like"/>
    <property type="match status" value="2"/>
</dbReference>
<dbReference type="SUPFAM" id="SSF52540">
    <property type="entry name" value="P-loop containing nucleoside triphosphate hydrolases"/>
    <property type="match status" value="1"/>
</dbReference>
<dbReference type="SUPFAM" id="SSF54211">
    <property type="entry name" value="Ribosomal protein S5 domain 2-like"/>
    <property type="match status" value="1"/>
</dbReference>
<dbReference type="SUPFAM" id="SSF50447">
    <property type="entry name" value="Translation proteins"/>
    <property type="match status" value="1"/>
</dbReference>
<dbReference type="PROSITE" id="PS00301">
    <property type="entry name" value="G_TR_1"/>
    <property type="match status" value="1"/>
</dbReference>
<dbReference type="PROSITE" id="PS51722">
    <property type="entry name" value="G_TR_2"/>
    <property type="match status" value="1"/>
</dbReference>
<sequence length="701" mass="77203">MAQKDVLTDLSRVRNFGIMAHIDAGKTTTTERILYYTGINYKIGEVHDGAATMDWMEQEQERGITITSAATTTFWKDNQLNIIDTPGHVDFTVEVERNLRVLDGAVAVFDGKEGVEPQSEQVWRQADKYDVPRICFVNKMDKIGADFYFSVRTMGERLGANAVPIQLPVGAEADFEGVVDLVEMNAKVWRGETKLGETYDTVEIPADLAEQAEEYRTKLLEVVAESDEHLLEKYLGGEELTVDEIKGAIRKLTIASEIYPVLCGSAFKNKGVQPMLDAVVDYLPSPLDVPPAIGHAPAKEDEEVVRKATTDEPFAALAFKIATHPFFGKLTYIRVYSGTVESGSQVINATKGKKERLGKLFQMHSNKENPVDRASAGHIYAVIGLKDTTTGDTLSDPNQQIVLESMTFPDPVIEVAIEPKTKSDQEKLSLSIQKLAEEDPTFKVHLDSETGQTVIGGMGELHLDILVDRMRREFKVEANVGKPQVAYKETIKRLVQNVEYTHKKQTGGSGQFAKVIINLEPFTGEEGATYEFESKVTGGRIPREYIPSVDAGAQDAMQYGVLAGYPLVNLKVTLLDGAYHEVDSSEMAFKIAGSQVLKKAAALAQPVILEPIMAVEVTTPEDYMGDVIGDLNSRRGQIQAMEERAGARVVRAHVPLSEMFGYVGDLRSKTQGRANYSMVFDSYSEVPANVSKEIIAKATGE</sequence>